<proteinExistence type="inferred from homology"/>
<gene>
    <name type="primary">HPT2</name>
    <name type="synonym">VTE2-2</name>
    <name type="ordered locus">Os07g0576000</name>
    <name type="ordered locus">LOC_Os07g38850</name>
    <name type="ORF">OJ1065_B06.2-1</name>
    <name type="ORF">OsJ_24854</name>
</gene>
<sequence>MASLASPPLPCRAAATASRSGRPAPRLLGPPPPPASPLLSSASARFPRAPCNAARWSRRDAVRVCSQAGAAGPAPLSKTLSDLKDSCWRFLRPHTIRGTALGSIALVARALIENPQLINWWLVFKAFYGLVALICGNGYIVGINQIYDIRIDKVNKPYLPIAAGDLSVQTAWLLVVLFAAAGFSIVVTNFGPFITSLYCLGLFLGTIYSVPPFRLKRYPVAAFLIIATVRGFLLNFGVYYATRAALGLTFQWSSPVAFITCFVTLFALVIAITKDLPDVEGDRKYQISTLATKLGVRNIAFLGSGLLIANYVAAIAVAFLMPQAFRRTVMVPVHAALAVGIIFQTWVLEQAKYTKDAISQYYRFIWNLFYAEYIFFPLI</sequence>
<keyword id="KW-0150">Chloroplast</keyword>
<keyword id="KW-0472">Membrane</keyword>
<keyword id="KW-0934">Plastid</keyword>
<keyword id="KW-1185">Reference proteome</keyword>
<keyword id="KW-0793">Thylakoid</keyword>
<keyword id="KW-0808">Transferase</keyword>
<keyword id="KW-0809">Transit peptide</keyword>
<keyword id="KW-0812">Transmembrane</keyword>
<keyword id="KW-1133">Transmembrane helix</keyword>
<feature type="transit peptide" description="Chloroplast" evidence="2">
    <location>
        <begin position="1"/>
        <end position="65"/>
    </location>
</feature>
<feature type="chain" id="PRO_0000409871" description="Probable homogentisate phytyltransferase 2, chloroplastic">
    <location>
        <begin position="66"/>
        <end position="379"/>
    </location>
</feature>
<feature type="transmembrane region" description="Helical" evidence="2">
    <location>
        <begin position="121"/>
        <end position="141"/>
    </location>
</feature>
<feature type="transmembrane region" description="Helical" evidence="2">
    <location>
        <begin position="174"/>
        <end position="194"/>
    </location>
</feature>
<feature type="transmembrane region" description="Helical" evidence="2">
    <location>
        <begin position="195"/>
        <end position="215"/>
    </location>
</feature>
<feature type="transmembrane region" description="Helical" evidence="2">
    <location>
        <begin position="220"/>
        <end position="240"/>
    </location>
</feature>
<feature type="transmembrane region" description="Helical" evidence="2">
    <location>
        <begin position="252"/>
        <end position="272"/>
    </location>
</feature>
<feature type="transmembrane region" description="Helical" evidence="2">
    <location>
        <begin position="299"/>
        <end position="319"/>
    </location>
</feature>
<feature type="transmembrane region" description="Helical" evidence="2">
    <location>
        <begin position="328"/>
        <end position="348"/>
    </location>
</feature>
<feature type="transmembrane region" description="Helical" evidence="2">
    <location>
        <begin position="361"/>
        <end position="378"/>
    </location>
</feature>
<feature type="region of interest" description="Disordered" evidence="3">
    <location>
        <begin position="1"/>
        <end position="39"/>
    </location>
</feature>
<protein>
    <recommendedName>
        <fullName>Probable homogentisate phytyltransferase 2, chloroplastic</fullName>
        <ecNumber>2.5.1.115</ecNumber>
    </recommendedName>
    <alternativeName>
        <fullName>Vitamin E pathway gene 2-2 protein</fullName>
        <shortName>OsVTE2-2</shortName>
    </alternativeName>
</protein>
<dbReference type="EC" id="2.5.1.115"/>
<dbReference type="EMBL" id="AP003804">
    <property type="protein sequence ID" value="BAC83059.1"/>
    <property type="status" value="ALT_SEQ"/>
    <property type="molecule type" value="Genomic_DNA"/>
</dbReference>
<dbReference type="EMBL" id="AP008213">
    <property type="protein sequence ID" value="BAF21997.2"/>
    <property type="molecule type" value="Genomic_DNA"/>
</dbReference>
<dbReference type="EMBL" id="AP014963">
    <property type="protein sequence ID" value="BAT02293.1"/>
    <property type="molecule type" value="Genomic_DNA"/>
</dbReference>
<dbReference type="EMBL" id="CM000144">
    <property type="protein sequence ID" value="EEE67463.1"/>
    <property type="molecule type" value="Genomic_DNA"/>
</dbReference>
<dbReference type="RefSeq" id="XP_015646905.1">
    <property type="nucleotide sequence ID" value="XM_015791419.1"/>
</dbReference>
<dbReference type="SMR" id="Q0D576"/>
<dbReference type="FunCoup" id="Q0D576">
    <property type="interactions" value="840"/>
</dbReference>
<dbReference type="STRING" id="39947.Q0D576"/>
<dbReference type="PaxDb" id="39947-Q0D576"/>
<dbReference type="EnsemblPlants" id="Os07t0576000-01">
    <property type="protein sequence ID" value="Os07t0576000-01"/>
    <property type="gene ID" value="Os07g0576000"/>
</dbReference>
<dbReference type="Gramene" id="Os07t0576000-01">
    <property type="protein sequence ID" value="Os07t0576000-01"/>
    <property type="gene ID" value="Os07g0576000"/>
</dbReference>
<dbReference type="KEGG" id="dosa:Os07g0576000"/>
<dbReference type="eggNOG" id="ENOG502QUHT">
    <property type="taxonomic scope" value="Eukaryota"/>
</dbReference>
<dbReference type="HOGENOM" id="CLU_048963_2_1_1"/>
<dbReference type="InParanoid" id="Q0D576"/>
<dbReference type="OrthoDB" id="1502398at2759"/>
<dbReference type="UniPathway" id="UPA00160"/>
<dbReference type="Proteomes" id="UP000000763">
    <property type="component" value="Chromosome 7"/>
</dbReference>
<dbReference type="Proteomes" id="UP000007752">
    <property type="component" value="Chromosome 7"/>
</dbReference>
<dbReference type="Proteomes" id="UP000059680">
    <property type="component" value="Chromosome 7"/>
</dbReference>
<dbReference type="ExpressionAtlas" id="Q0D576">
    <property type="expression patterns" value="baseline and differential"/>
</dbReference>
<dbReference type="GO" id="GO:0009535">
    <property type="term" value="C:chloroplast thylakoid membrane"/>
    <property type="evidence" value="ECO:0007669"/>
    <property type="project" value="UniProtKB-SubCell"/>
</dbReference>
<dbReference type="GO" id="GO:0010176">
    <property type="term" value="F:homogentisate phytyltransferase activity"/>
    <property type="evidence" value="ECO:0007669"/>
    <property type="project" value="UniProtKB-EC"/>
</dbReference>
<dbReference type="GO" id="GO:0010189">
    <property type="term" value="P:vitamin E biosynthetic process"/>
    <property type="evidence" value="ECO:0007669"/>
    <property type="project" value="UniProtKB-UniPathway"/>
</dbReference>
<dbReference type="CDD" id="cd13960">
    <property type="entry name" value="PT_UbiA_HPT1"/>
    <property type="match status" value="1"/>
</dbReference>
<dbReference type="Gene3D" id="1.10.357.140">
    <property type="entry name" value="UbiA prenyltransferase"/>
    <property type="match status" value="1"/>
</dbReference>
<dbReference type="InterPro" id="IPR044502">
    <property type="entry name" value="AtHST-like"/>
</dbReference>
<dbReference type="InterPro" id="IPR000537">
    <property type="entry name" value="UbiA_prenyltransferase"/>
</dbReference>
<dbReference type="InterPro" id="IPR044878">
    <property type="entry name" value="UbiA_sf"/>
</dbReference>
<dbReference type="NCBIfam" id="NF009525">
    <property type="entry name" value="PRK12887.1"/>
    <property type="match status" value="1"/>
</dbReference>
<dbReference type="PANTHER" id="PTHR43009">
    <property type="entry name" value="HOMOGENTISATE SOLANESYLTRANSFERASE, CHLOROPLASTIC"/>
    <property type="match status" value="1"/>
</dbReference>
<dbReference type="PANTHER" id="PTHR43009:SF10">
    <property type="entry name" value="HOMOGENTISATE SOLANESYLTRANSFERASE, CHLOROPLASTIC"/>
    <property type="match status" value="1"/>
</dbReference>
<dbReference type="Pfam" id="PF01040">
    <property type="entry name" value="UbiA"/>
    <property type="match status" value="1"/>
</dbReference>
<comment type="function">
    <text evidence="1">Involved in the synthesis of tocopherol (vitamin E). Catalyzes the condensation of homogentisate and phytyl diphosphate to form dimethylphytylhydrquinone (By similarity).</text>
</comment>
<comment type="catalytic activity">
    <reaction>
        <text>phytyl diphosphate + homogentisate + H(+) = 2-methyl-6-phytyl-1,4-benzene-1,4-diol + CO2 + diphosphate</text>
        <dbReference type="Rhea" id="RHEA:37975"/>
        <dbReference type="ChEBI" id="CHEBI:15378"/>
        <dbReference type="ChEBI" id="CHEBI:16169"/>
        <dbReference type="ChEBI" id="CHEBI:16526"/>
        <dbReference type="ChEBI" id="CHEBI:33019"/>
        <dbReference type="ChEBI" id="CHEBI:75434"/>
        <dbReference type="ChEBI" id="CHEBI:75920"/>
        <dbReference type="EC" id="2.5.1.115"/>
    </reaction>
</comment>
<comment type="pathway">
    <text>Cofactor biosynthesis; tocopherol biosynthesis.</text>
</comment>
<comment type="subcellular location">
    <subcellularLocation>
        <location evidence="4">Plastid</location>
        <location evidence="4">Chloroplast thylakoid membrane</location>
        <topology evidence="4">Multi-pass membrane protein</topology>
    </subcellularLocation>
</comment>
<comment type="similarity">
    <text evidence="4">Belongs to the UbiA prenyltransferase family.</text>
</comment>
<comment type="sequence caution" evidence="4">
    <conflict type="erroneous gene model prediction">
        <sequence resource="EMBL-CDS" id="BAC83059"/>
    </conflict>
</comment>
<name>HPT2_ORYSJ</name>
<organism>
    <name type="scientific">Oryza sativa subsp. japonica</name>
    <name type="common">Rice</name>
    <dbReference type="NCBI Taxonomy" id="39947"/>
    <lineage>
        <taxon>Eukaryota</taxon>
        <taxon>Viridiplantae</taxon>
        <taxon>Streptophyta</taxon>
        <taxon>Embryophyta</taxon>
        <taxon>Tracheophyta</taxon>
        <taxon>Spermatophyta</taxon>
        <taxon>Magnoliopsida</taxon>
        <taxon>Liliopsida</taxon>
        <taxon>Poales</taxon>
        <taxon>Poaceae</taxon>
        <taxon>BOP clade</taxon>
        <taxon>Oryzoideae</taxon>
        <taxon>Oryzeae</taxon>
        <taxon>Oryzinae</taxon>
        <taxon>Oryza</taxon>
        <taxon>Oryza sativa</taxon>
    </lineage>
</organism>
<evidence type="ECO:0000250" key="1"/>
<evidence type="ECO:0000255" key="2"/>
<evidence type="ECO:0000256" key="3">
    <source>
        <dbReference type="SAM" id="MobiDB-lite"/>
    </source>
</evidence>
<evidence type="ECO:0000305" key="4"/>
<reference key="1">
    <citation type="journal article" date="2005" name="Nature">
        <title>The map-based sequence of the rice genome.</title>
        <authorList>
            <consortium name="International rice genome sequencing project (IRGSP)"/>
        </authorList>
    </citation>
    <scope>NUCLEOTIDE SEQUENCE [LARGE SCALE GENOMIC DNA]</scope>
    <source>
        <strain>cv. Nipponbare</strain>
    </source>
</reference>
<reference key="2">
    <citation type="journal article" date="2008" name="Nucleic Acids Res.">
        <title>The rice annotation project database (RAP-DB): 2008 update.</title>
        <authorList>
            <consortium name="The rice annotation project (RAP)"/>
        </authorList>
    </citation>
    <scope>GENOME REANNOTATION</scope>
    <source>
        <strain>cv. Nipponbare</strain>
    </source>
</reference>
<reference key="3">
    <citation type="journal article" date="2013" name="Rice">
        <title>Improvement of the Oryza sativa Nipponbare reference genome using next generation sequence and optical map data.</title>
        <authorList>
            <person name="Kawahara Y."/>
            <person name="de la Bastide M."/>
            <person name="Hamilton J.P."/>
            <person name="Kanamori H."/>
            <person name="McCombie W.R."/>
            <person name="Ouyang S."/>
            <person name="Schwartz D.C."/>
            <person name="Tanaka T."/>
            <person name="Wu J."/>
            <person name="Zhou S."/>
            <person name="Childs K.L."/>
            <person name="Davidson R.M."/>
            <person name="Lin H."/>
            <person name="Quesada-Ocampo L."/>
            <person name="Vaillancourt B."/>
            <person name="Sakai H."/>
            <person name="Lee S.S."/>
            <person name="Kim J."/>
            <person name="Numa H."/>
            <person name="Itoh T."/>
            <person name="Buell C.R."/>
            <person name="Matsumoto T."/>
        </authorList>
    </citation>
    <scope>GENOME REANNOTATION</scope>
    <source>
        <strain>cv. Nipponbare</strain>
    </source>
</reference>
<reference key="4">
    <citation type="journal article" date="2005" name="PLoS Biol.">
        <title>The genomes of Oryza sativa: a history of duplications.</title>
        <authorList>
            <person name="Yu J."/>
            <person name="Wang J."/>
            <person name="Lin W."/>
            <person name="Li S."/>
            <person name="Li H."/>
            <person name="Zhou J."/>
            <person name="Ni P."/>
            <person name="Dong W."/>
            <person name="Hu S."/>
            <person name="Zeng C."/>
            <person name="Zhang J."/>
            <person name="Zhang Y."/>
            <person name="Li R."/>
            <person name="Xu Z."/>
            <person name="Li S."/>
            <person name="Li X."/>
            <person name="Zheng H."/>
            <person name="Cong L."/>
            <person name="Lin L."/>
            <person name="Yin J."/>
            <person name="Geng J."/>
            <person name="Li G."/>
            <person name="Shi J."/>
            <person name="Liu J."/>
            <person name="Lv H."/>
            <person name="Li J."/>
            <person name="Wang J."/>
            <person name="Deng Y."/>
            <person name="Ran L."/>
            <person name="Shi X."/>
            <person name="Wang X."/>
            <person name="Wu Q."/>
            <person name="Li C."/>
            <person name="Ren X."/>
            <person name="Wang J."/>
            <person name="Wang X."/>
            <person name="Li D."/>
            <person name="Liu D."/>
            <person name="Zhang X."/>
            <person name="Ji Z."/>
            <person name="Zhao W."/>
            <person name="Sun Y."/>
            <person name="Zhang Z."/>
            <person name="Bao J."/>
            <person name="Han Y."/>
            <person name="Dong L."/>
            <person name="Ji J."/>
            <person name="Chen P."/>
            <person name="Wu S."/>
            <person name="Liu J."/>
            <person name="Xiao Y."/>
            <person name="Bu D."/>
            <person name="Tan J."/>
            <person name="Yang L."/>
            <person name="Ye C."/>
            <person name="Zhang J."/>
            <person name="Xu J."/>
            <person name="Zhou Y."/>
            <person name="Yu Y."/>
            <person name="Zhang B."/>
            <person name="Zhuang S."/>
            <person name="Wei H."/>
            <person name="Liu B."/>
            <person name="Lei M."/>
            <person name="Yu H."/>
            <person name="Li Y."/>
            <person name="Xu H."/>
            <person name="Wei S."/>
            <person name="He X."/>
            <person name="Fang L."/>
            <person name="Zhang Z."/>
            <person name="Zhang Y."/>
            <person name="Huang X."/>
            <person name="Su Z."/>
            <person name="Tong W."/>
            <person name="Li J."/>
            <person name="Tong Z."/>
            <person name="Li S."/>
            <person name="Ye J."/>
            <person name="Wang L."/>
            <person name="Fang L."/>
            <person name="Lei T."/>
            <person name="Chen C.-S."/>
            <person name="Chen H.-C."/>
            <person name="Xu Z."/>
            <person name="Li H."/>
            <person name="Huang H."/>
            <person name="Zhang F."/>
            <person name="Xu H."/>
            <person name="Li N."/>
            <person name="Zhao C."/>
            <person name="Li S."/>
            <person name="Dong L."/>
            <person name="Huang Y."/>
            <person name="Li L."/>
            <person name="Xi Y."/>
            <person name="Qi Q."/>
            <person name="Li W."/>
            <person name="Zhang B."/>
            <person name="Hu W."/>
            <person name="Zhang Y."/>
            <person name="Tian X."/>
            <person name="Jiao Y."/>
            <person name="Liang X."/>
            <person name="Jin J."/>
            <person name="Gao L."/>
            <person name="Zheng W."/>
            <person name="Hao B."/>
            <person name="Liu S.-M."/>
            <person name="Wang W."/>
            <person name="Yuan L."/>
            <person name="Cao M."/>
            <person name="McDermott J."/>
            <person name="Samudrala R."/>
            <person name="Wang J."/>
            <person name="Wong G.K.-S."/>
            <person name="Yang H."/>
        </authorList>
    </citation>
    <scope>NUCLEOTIDE SEQUENCE [LARGE SCALE GENOMIC DNA]</scope>
    <source>
        <strain>cv. Nipponbare</strain>
    </source>
</reference>
<reference key="5">
    <citation type="journal article" date="2006" name="Planta">
        <title>Identification and characterization of an Arabidopsis homogentisate phytyltransferase paralog.</title>
        <authorList>
            <person name="Venkatesh T.V."/>
            <person name="Karunanandaa B."/>
            <person name="Free D.L."/>
            <person name="Rottnek J.M."/>
            <person name="Baszis S.R."/>
            <person name="Valentin H.E."/>
        </authorList>
    </citation>
    <scope>NOMENCLATURE</scope>
</reference>
<accession>Q0D576</accession>
<accession>A0A0P0X8E9</accession>
<accession>B9FY26</accession>
<accession>Q6ZLA8</accession>